<name>RPPH_CELJU</name>
<proteinExistence type="inferred from homology"/>
<protein>
    <recommendedName>
        <fullName evidence="1">RNA pyrophosphohydrolase</fullName>
        <ecNumber evidence="1">3.6.1.-</ecNumber>
    </recommendedName>
    <alternativeName>
        <fullName evidence="1">(Di)nucleoside polyphosphate hydrolase</fullName>
    </alternativeName>
</protein>
<reference key="1">
    <citation type="journal article" date="2008" name="J. Bacteriol.">
        <title>Insights into plant cell wall degradation from the genome sequence of the soil bacterium Cellvibrio japonicus.</title>
        <authorList>
            <person name="DeBoy R.T."/>
            <person name="Mongodin E.F."/>
            <person name="Fouts D.E."/>
            <person name="Tailford L.E."/>
            <person name="Khouri H."/>
            <person name="Emerson J.B."/>
            <person name="Mohamoud Y."/>
            <person name="Watkins K."/>
            <person name="Henrissat B."/>
            <person name="Gilbert H.J."/>
            <person name="Nelson K.E."/>
        </authorList>
    </citation>
    <scope>NUCLEOTIDE SEQUENCE [LARGE SCALE GENOMIC DNA]</scope>
    <source>
        <strain>Ueda107</strain>
    </source>
</reference>
<comment type="function">
    <text evidence="1">Accelerates the degradation of transcripts by removing pyrophosphate from the 5'-end of triphosphorylated RNA, leading to a more labile monophosphorylated state that can stimulate subsequent ribonuclease cleavage.</text>
</comment>
<comment type="cofactor">
    <cofactor evidence="1">
        <name>a divalent metal cation</name>
        <dbReference type="ChEBI" id="CHEBI:60240"/>
    </cofactor>
</comment>
<comment type="similarity">
    <text evidence="1">Belongs to the Nudix hydrolase family. RppH subfamily.</text>
</comment>
<evidence type="ECO:0000255" key="1">
    <source>
        <dbReference type="HAMAP-Rule" id="MF_00298"/>
    </source>
</evidence>
<sequence>MIDADGFRPNVGIILTNHQGQLLWARRVGGQDAWQFPQGGINAHESPEQALYRELHEEVGLYPQDVEILACTRGWLRYRLPHRLVRHNSLPLCVGQKQKWFLLRLLSDDARVCLENGGRAEFDDWRWVSYWYPLGKVVAFKRDVYRRALRELSLAHAQLENSNRKELSRG</sequence>
<gene>
    <name evidence="1" type="primary">rppH</name>
    <name evidence="1" type="synonym">nudH</name>
    <name type="ordered locus">CJA_0465</name>
</gene>
<organism>
    <name type="scientific">Cellvibrio japonicus (strain Ueda107)</name>
    <name type="common">Pseudomonas fluorescens subsp. cellulosa</name>
    <dbReference type="NCBI Taxonomy" id="498211"/>
    <lineage>
        <taxon>Bacteria</taxon>
        <taxon>Pseudomonadati</taxon>
        <taxon>Pseudomonadota</taxon>
        <taxon>Gammaproteobacteria</taxon>
        <taxon>Cellvibrionales</taxon>
        <taxon>Cellvibrionaceae</taxon>
        <taxon>Cellvibrio</taxon>
    </lineage>
</organism>
<dbReference type="EC" id="3.6.1.-" evidence="1"/>
<dbReference type="EMBL" id="CP000934">
    <property type="protein sequence ID" value="ACE84976.1"/>
    <property type="molecule type" value="Genomic_DNA"/>
</dbReference>
<dbReference type="RefSeq" id="WP_012486145.1">
    <property type="nucleotide sequence ID" value="NC_010995.1"/>
</dbReference>
<dbReference type="SMR" id="B3PIV4"/>
<dbReference type="STRING" id="498211.CJA_0465"/>
<dbReference type="KEGG" id="cja:CJA_0465"/>
<dbReference type="eggNOG" id="COG0494">
    <property type="taxonomic scope" value="Bacteria"/>
</dbReference>
<dbReference type="HOGENOM" id="CLU_087195_3_1_6"/>
<dbReference type="OrthoDB" id="9816040at2"/>
<dbReference type="Proteomes" id="UP000001036">
    <property type="component" value="Chromosome"/>
</dbReference>
<dbReference type="GO" id="GO:0005737">
    <property type="term" value="C:cytoplasm"/>
    <property type="evidence" value="ECO:0007669"/>
    <property type="project" value="TreeGrafter"/>
</dbReference>
<dbReference type="GO" id="GO:0034353">
    <property type="term" value="F:mRNA 5'-diphosphatase activity"/>
    <property type="evidence" value="ECO:0007669"/>
    <property type="project" value="TreeGrafter"/>
</dbReference>
<dbReference type="GO" id="GO:0006402">
    <property type="term" value="P:mRNA catabolic process"/>
    <property type="evidence" value="ECO:0007669"/>
    <property type="project" value="TreeGrafter"/>
</dbReference>
<dbReference type="CDD" id="cd03671">
    <property type="entry name" value="NUDIX_Ap4A_hydrolase_plant_like"/>
    <property type="match status" value="1"/>
</dbReference>
<dbReference type="FunFam" id="3.90.79.10:FF:000001">
    <property type="entry name" value="RNA pyrophosphohydrolase"/>
    <property type="match status" value="1"/>
</dbReference>
<dbReference type="Gene3D" id="3.90.79.10">
    <property type="entry name" value="Nucleoside Triphosphate Pyrophosphohydrolase"/>
    <property type="match status" value="1"/>
</dbReference>
<dbReference type="HAMAP" id="MF_00298">
    <property type="entry name" value="Nudix_RppH"/>
    <property type="match status" value="1"/>
</dbReference>
<dbReference type="InterPro" id="IPR020476">
    <property type="entry name" value="Nudix_hydrolase"/>
</dbReference>
<dbReference type="InterPro" id="IPR015797">
    <property type="entry name" value="NUDIX_hydrolase-like_dom_sf"/>
</dbReference>
<dbReference type="InterPro" id="IPR020084">
    <property type="entry name" value="NUDIX_hydrolase_CS"/>
</dbReference>
<dbReference type="InterPro" id="IPR000086">
    <property type="entry name" value="NUDIX_hydrolase_dom"/>
</dbReference>
<dbReference type="InterPro" id="IPR022927">
    <property type="entry name" value="RppH"/>
</dbReference>
<dbReference type="NCBIfam" id="NF001934">
    <property type="entry name" value="PRK00714.1-1"/>
    <property type="match status" value="1"/>
</dbReference>
<dbReference type="NCBIfam" id="NF001937">
    <property type="entry name" value="PRK00714.1-4"/>
    <property type="match status" value="1"/>
</dbReference>
<dbReference type="NCBIfam" id="NF001938">
    <property type="entry name" value="PRK00714.1-5"/>
    <property type="match status" value="1"/>
</dbReference>
<dbReference type="PANTHER" id="PTHR23114">
    <property type="entry name" value="M7GPPPN-MRNA HYDROLASE"/>
    <property type="match status" value="1"/>
</dbReference>
<dbReference type="PANTHER" id="PTHR23114:SF17">
    <property type="entry name" value="M7GPPPN-MRNA HYDROLASE"/>
    <property type="match status" value="1"/>
</dbReference>
<dbReference type="Pfam" id="PF00293">
    <property type="entry name" value="NUDIX"/>
    <property type="match status" value="1"/>
</dbReference>
<dbReference type="PRINTS" id="PR00502">
    <property type="entry name" value="NUDIXFAMILY"/>
</dbReference>
<dbReference type="SUPFAM" id="SSF55811">
    <property type="entry name" value="Nudix"/>
    <property type="match status" value="1"/>
</dbReference>
<dbReference type="PROSITE" id="PS51462">
    <property type="entry name" value="NUDIX"/>
    <property type="match status" value="1"/>
</dbReference>
<dbReference type="PROSITE" id="PS00893">
    <property type="entry name" value="NUDIX_BOX"/>
    <property type="match status" value="1"/>
</dbReference>
<accession>B3PIV4</accession>
<feature type="chain" id="PRO_1000115272" description="RNA pyrophosphohydrolase">
    <location>
        <begin position="1"/>
        <end position="170"/>
    </location>
</feature>
<feature type="domain" description="Nudix hydrolase" evidence="1">
    <location>
        <begin position="6"/>
        <end position="150"/>
    </location>
</feature>
<feature type="short sequence motif" description="Nudix box">
    <location>
        <begin position="39"/>
        <end position="60"/>
    </location>
</feature>
<keyword id="KW-0378">Hydrolase</keyword>
<keyword id="KW-1185">Reference proteome</keyword>